<reference key="1">
    <citation type="submission" date="2007-03" db="EMBL/GenBank/DDBJ databases">
        <authorList>
            <person name="Heidelberg J."/>
        </authorList>
    </citation>
    <scope>NUCLEOTIDE SEQUENCE [LARGE SCALE GENOMIC DNA]</scope>
    <source>
        <strain>ATCC 39541 / Classical Ogawa 395 / O395</strain>
    </source>
</reference>
<reference key="2">
    <citation type="journal article" date="2008" name="PLoS ONE">
        <title>A recalibrated molecular clock and independent origins for the cholera pandemic clones.</title>
        <authorList>
            <person name="Feng L."/>
            <person name="Reeves P.R."/>
            <person name="Lan R."/>
            <person name="Ren Y."/>
            <person name="Gao C."/>
            <person name="Zhou Z."/>
            <person name="Ren Y."/>
            <person name="Cheng J."/>
            <person name="Wang W."/>
            <person name="Wang J."/>
            <person name="Qian W."/>
            <person name="Li D."/>
            <person name="Wang L."/>
        </authorList>
    </citation>
    <scope>NUCLEOTIDE SEQUENCE [LARGE SCALE GENOMIC DNA]</scope>
    <source>
        <strain>ATCC 39541 / Classical Ogawa 395 / O395</strain>
    </source>
</reference>
<dbReference type="EC" id="2.7.1.30" evidence="1"/>
<dbReference type="EMBL" id="CP000626">
    <property type="protein sequence ID" value="ABQ18768.1"/>
    <property type="molecule type" value="Genomic_DNA"/>
</dbReference>
<dbReference type="EMBL" id="CP001236">
    <property type="protein sequence ID" value="ACP11403.1"/>
    <property type="molecule type" value="Genomic_DNA"/>
</dbReference>
<dbReference type="RefSeq" id="WP_000139400.1">
    <property type="nucleotide sequence ID" value="NZ_JAACZH010000025.1"/>
</dbReference>
<dbReference type="SMR" id="A5EZR2"/>
<dbReference type="KEGG" id="vco:VC0395_0682"/>
<dbReference type="KEGG" id="vcr:VC395_A0569"/>
<dbReference type="PATRIC" id="fig|345073.21.peg.3310"/>
<dbReference type="eggNOG" id="COG0554">
    <property type="taxonomic scope" value="Bacteria"/>
</dbReference>
<dbReference type="HOGENOM" id="CLU_009281_2_3_6"/>
<dbReference type="OrthoDB" id="9805576at2"/>
<dbReference type="UniPathway" id="UPA00618">
    <property type="reaction ID" value="UER00672"/>
</dbReference>
<dbReference type="Proteomes" id="UP000000249">
    <property type="component" value="Chromosome 1"/>
</dbReference>
<dbReference type="GO" id="GO:0005829">
    <property type="term" value="C:cytosol"/>
    <property type="evidence" value="ECO:0007669"/>
    <property type="project" value="TreeGrafter"/>
</dbReference>
<dbReference type="GO" id="GO:0005524">
    <property type="term" value="F:ATP binding"/>
    <property type="evidence" value="ECO:0007669"/>
    <property type="project" value="UniProtKB-UniRule"/>
</dbReference>
<dbReference type="GO" id="GO:0004370">
    <property type="term" value="F:glycerol kinase activity"/>
    <property type="evidence" value="ECO:0000250"/>
    <property type="project" value="UniProtKB"/>
</dbReference>
<dbReference type="GO" id="GO:0019563">
    <property type="term" value="P:glycerol catabolic process"/>
    <property type="evidence" value="ECO:0007669"/>
    <property type="project" value="UniProtKB-UniRule"/>
</dbReference>
<dbReference type="GO" id="GO:0006071">
    <property type="term" value="P:glycerol metabolic process"/>
    <property type="evidence" value="ECO:0000250"/>
    <property type="project" value="UniProtKB"/>
</dbReference>
<dbReference type="GO" id="GO:0006072">
    <property type="term" value="P:glycerol-3-phosphate metabolic process"/>
    <property type="evidence" value="ECO:0007669"/>
    <property type="project" value="InterPro"/>
</dbReference>
<dbReference type="CDD" id="cd07769">
    <property type="entry name" value="ASKHA_NBD_FGGY_GK"/>
    <property type="match status" value="1"/>
</dbReference>
<dbReference type="FunFam" id="3.30.420.40:FF:000007">
    <property type="entry name" value="Glycerol kinase"/>
    <property type="match status" value="1"/>
</dbReference>
<dbReference type="FunFam" id="3.30.420.40:FF:000008">
    <property type="entry name" value="Glycerol kinase"/>
    <property type="match status" value="1"/>
</dbReference>
<dbReference type="Gene3D" id="3.30.420.40">
    <property type="match status" value="2"/>
</dbReference>
<dbReference type="HAMAP" id="MF_00186">
    <property type="entry name" value="Glycerol_kin"/>
    <property type="match status" value="1"/>
</dbReference>
<dbReference type="InterPro" id="IPR043129">
    <property type="entry name" value="ATPase_NBD"/>
</dbReference>
<dbReference type="InterPro" id="IPR000577">
    <property type="entry name" value="Carb_kinase_FGGY"/>
</dbReference>
<dbReference type="InterPro" id="IPR018483">
    <property type="entry name" value="Carb_kinase_FGGY_CS"/>
</dbReference>
<dbReference type="InterPro" id="IPR018485">
    <property type="entry name" value="FGGY_C"/>
</dbReference>
<dbReference type="InterPro" id="IPR018484">
    <property type="entry name" value="FGGY_N"/>
</dbReference>
<dbReference type="InterPro" id="IPR005999">
    <property type="entry name" value="Glycerol_kin"/>
</dbReference>
<dbReference type="NCBIfam" id="TIGR01311">
    <property type="entry name" value="glycerol_kin"/>
    <property type="match status" value="1"/>
</dbReference>
<dbReference type="NCBIfam" id="NF000756">
    <property type="entry name" value="PRK00047.1"/>
    <property type="match status" value="1"/>
</dbReference>
<dbReference type="PANTHER" id="PTHR10196:SF69">
    <property type="entry name" value="GLYCEROL KINASE"/>
    <property type="match status" value="1"/>
</dbReference>
<dbReference type="PANTHER" id="PTHR10196">
    <property type="entry name" value="SUGAR KINASE"/>
    <property type="match status" value="1"/>
</dbReference>
<dbReference type="Pfam" id="PF02782">
    <property type="entry name" value="FGGY_C"/>
    <property type="match status" value="1"/>
</dbReference>
<dbReference type="Pfam" id="PF00370">
    <property type="entry name" value="FGGY_N"/>
    <property type="match status" value="1"/>
</dbReference>
<dbReference type="PIRSF" id="PIRSF000538">
    <property type="entry name" value="GlpK"/>
    <property type="match status" value="1"/>
</dbReference>
<dbReference type="SUPFAM" id="SSF53067">
    <property type="entry name" value="Actin-like ATPase domain"/>
    <property type="match status" value="2"/>
</dbReference>
<dbReference type="PROSITE" id="PS00933">
    <property type="entry name" value="FGGY_KINASES_1"/>
    <property type="match status" value="1"/>
</dbReference>
<dbReference type="PROSITE" id="PS00445">
    <property type="entry name" value="FGGY_KINASES_2"/>
    <property type="match status" value="1"/>
</dbReference>
<gene>
    <name evidence="1" type="primary">glpK</name>
    <name type="synonym">gplK</name>
    <name type="ordered locus">VC0395_0682</name>
    <name type="ordered locus">VC395_A0569</name>
</gene>
<keyword id="KW-0067">ATP-binding</keyword>
<keyword id="KW-0319">Glycerol metabolism</keyword>
<keyword id="KW-0418">Kinase</keyword>
<keyword id="KW-0547">Nucleotide-binding</keyword>
<keyword id="KW-0808">Transferase</keyword>
<organism>
    <name type="scientific">Vibrio cholerae serotype O1 (strain ATCC 39541 / Classical Ogawa 395 / O395)</name>
    <dbReference type="NCBI Taxonomy" id="345073"/>
    <lineage>
        <taxon>Bacteria</taxon>
        <taxon>Pseudomonadati</taxon>
        <taxon>Pseudomonadota</taxon>
        <taxon>Gammaproteobacteria</taxon>
        <taxon>Vibrionales</taxon>
        <taxon>Vibrionaceae</taxon>
        <taxon>Vibrio</taxon>
    </lineage>
</organism>
<sequence length="505" mass="55623">MTEQKYVVALDQGTTSSRAVVLDHDANIVSVSQREFTQIYPQAGWVEHDPMEIYATQSSTLVEALGKAGIRSDEVAAIGITNQRETTVVWNKETGKPVYNAIVWQCRRTATICEELKARGLESYIRDNTGLVLDPYFSGTKIKWILDNVEGAREQAEAGQLLFGTVDTWLVWKMTQGRVHVTDYTNASRTMLFNINTLQWDEKILAEFNIPLSMMPEVKKSSEVYGQTNIGGKGGTRIPIAGIAGDQQAALYGQMCVQAGQAKNTYGTGCFLLMNTGQEKVTSHNGLLTTLACGPRGEPAYALEGAVFMGGASIQWLRDELKLISDARDSEYFATKVDTSNGVYVVPAFTGLGAPYWDAYARGTIVGLTRGVNSNHIIRATLESIAYQTRDVLDAMQADSGIKLSALRVDGGAVANNFLMQFQADVLDTEVHRPKVTEVTALGAAYLAGLAVGFWDGLEELQGKAEIDRSFKPHHDEEKRQRRYKGWKRAVKCAQAWAVLHNEEE</sequence>
<proteinExistence type="inferred from homology"/>
<protein>
    <recommendedName>
        <fullName evidence="1">Glycerol kinase</fullName>
        <ecNumber evidence="1">2.7.1.30</ecNumber>
    </recommendedName>
    <alternativeName>
        <fullName evidence="1">ATP:glycerol 3-phosphotransferase</fullName>
    </alternativeName>
    <alternativeName>
        <fullName evidence="1">Glycerokinase</fullName>
        <shortName evidence="1">GK</shortName>
    </alternativeName>
</protein>
<feature type="chain" id="PRO_1000071686" description="Glycerol kinase">
    <location>
        <begin position="1"/>
        <end position="505"/>
    </location>
</feature>
<feature type="binding site" evidence="1">
    <location>
        <position position="14"/>
    </location>
    <ligand>
        <name>ADP</name>
        <dbReference type="ChEBI" id="CHEBI:456216"/>
    </ligand>
</feature>
<feature type="binding site" evidence="1">
    <location>
        <position position="14"/>
    </location>
    <ligand>
        <name>ATP</name>
        <dbReference type="ChEBI" id="CHEBI:30616"/>
    </ligand>
</feature>
<feature type="binding site" evidence="1">
    <location>
        <position position="14"/>
    </location>
    <ligand>
        <name>sn-glycerol 3-phosphate</name>
        <dbReference type="ChEBI" id="CHEBI:57597"/>
    </ligand>
</feature>
<feature type="binding site" evidence="1">
    <location>
        <position position="15"/>
    </location>
    <ligand>
        <name>ATP</name>
        <dbReference type="ChEBI" id="CHEBI:30616"/>
    </ligand>
</feature>
<feature type="binding site" evidence="1">
    <location>
        <position position="16"/>
    </location>
    <ligand>
        <name>ATP</name>
        <dbReference type="ChEBI" id="CHEBI:30616"/>
    </ligand>
</feature>
<feature type="binding site" evidence="1">
    <location>
        <position position="18"/>
    </location>
    <ligand>
        <name>ADP</name>
        <dbReference type="ChEBI" id="CHEBI:456216"/>
    </ligand>
</feature>
<feature type="binding site" evidence="1">
    <location>
        <position position="84"/>
    </location>
    <ligand>
        <name>glycerol</name>
        <dbReference type="ChEBI" id="CHEBI:17754"/>
    </ligand>
</feature>
<feature type="binding site" evidence="1">
    <location>
        <position position="84"/>
    </location>
    <ligand>
        <name>sn-glycerol 3-phosphate</name>
        <dbReference type="ChEBI" id="CHEBI:57597"/>
    </ligand>
</feature>
<feature type="binding site" evidence="1">
    <location>
        <position position="85"/>
    </location>
    <ligand>
        <name>glycerol</name>
        <dbReference type="ChEBI" id="CHEBI:17754"/>
    </ligand>
</feature>
<feature type="binding site" evidence="1">
    <location>
        <position position="85"/>
    </location>
    <ligand>
        <name>sn-glycerol 3-phosphate</name>
        <dbReference type="ChEBI" id="CHEBI:57597"/>
    </ligand>
</feature>
<feature type="binding site" evidence="1">
    <location>
        <position position="136"/>
    </location>
    <ligand>
        <name>glycerol</name>
        <dbReference type="ChEBI" id="CHEBI:17754"/>
    </ligand>
</feature>
<feature type="binding site" evidence="1">
    <location>
        <position position="136"/>
    </location>
    <ligand>
        <name>sn-glycerol 3-phosphate</name>
        <dbReference type="ChEBI" id="CHEBI:57597"/>
    </ligand>
</feature>
<feature type="binding site" evidence="1">
    <location>
        <position position="246"/>
    </location>
    <ligand>
        <name>glycerol</name>
        <dbReference type="ChEBI" id="CHEBI:17754"/>
    </ligand>
</feature>
<feature type="binding site" evidence="1">
    <location>
        <position position="246"/>
    </location>
    <ligand>
        <name>sn-glycerol 3-phosphate</name>
        <dbReference type="ChEBI" id="CHEBI:57597"/>
    </ligand>
</feature>
<feature type="binding site" evidence="1">
    <location>
        <position position="247"/>
    </location>
    <ligand>
        <name>glycerol</name>
        <dbReference type="ChEBI" id="CHEBI:17754"/>
    </ligand>
</feature>
<feature type="binding site" evidence="1">
    <location>
        <position position="268"/>
    </location>
    <ligand>
        <name>ADP</name>
        <dbReference type="ChEBI" id="CHEBI:456216"/>
    </ligand>
</feature>
<feature type="binding site" evidence="1">
    <location>
        <position position="268"/>
    </location>
    <ligand>
        <name>ATP</name>
        <dbReference type="ChEBI" id="CHEBI:30616"/>
    </ligand>
</feature>
<feature type="binding site" evidence="1">
    <location>
        <position position="311"/>
    </location>
    <ligand>
        <name>ADP</name>
        <dbReference type="ChEBI" id="CHEBI:456216"/>
    </ligand>
</feature>
<feature type="binding site" evidence="1">
    <location>
        <position position="311"/>
    </location>
    <ligand>
        <name>ATP</name>
        <dbReference type="ChEBI" id="CHEBI:30616"/>
    </ligand>
</feature>
<feature type="binding site" evidence="1">
    <location>
        <position position="315"/>
    </location>
    <ligand>
        <name>ATP</name>
        <dbReference type="ChEBI" id="CHEBI:30616"/>
    </ligand>
</feature>
<feature type="binding site" evidence="1">
    <location>
        <position position="412"/>
    </location>
    <ligand>
        <name>ADP</name>
        <dbReference type="ChEBI" id="CHEBI:456216"/>
    </ligand>
</feature>
<feature type="binding site" evidence="1">
    <location>
        <position position="412"/>
    </location>
    <ligand>
        <name>ATP</name>
        <dbReference type="ChEBI" id="CHEBI:30616"/>
    </ligand>
</feature>
<feature type="binding site" evidence="1">
    <location>
        <position position="416"/>
    </location>
    <ligand>
        <name>ADP</name>
        <dbReference type="ChEBI" id="CHEBI:456216"/>
    </ligand>
</feature>
<name>GLPK_VIBC3</name>
<evidence type="ECO:0000255" key="1">
    <source>
        <dbReference type="HAMAP-Rule" id="MF_00186"/>
    </source>
</evidence>
<accession>A5EZR2</accession>
<accession>C3M5J0</accession>
<comment type="function">
    <text evidence="1">Key enzyme in the regulation of glycerol uptake and metabolism. Catalyzes the phosphorylation of glycerol to yield sn-glycerol 3-phosphate.</text>
</comment>
<comment type="catalytic activity">
    <reaction evidence="1">
        <text>glycerol + ATP = sn-glycerol 3-phosphate + ADP + H(+)</text>
        <dbReference type="Rhea" id="RHEA:21644"/>
        <dbReference type="ChEBI" id="CHEBI:15378"/>
        <dbReference type="ChEBI" id="CHEBI:17754"/>
        <dbReference type="ChEBI" id="CHEBI:30616"/>
        <dbReference type="ChEBI" id="CHEBI:57597"/>
        <dbReference type="ChEBI" id="CHEBI:456216"/>
        <dbReference type="EC" id="2.7.1.30"/>
    </reaction>
</comment>
<comment type="activity regulation">
    <text evidence="1">Inhibited by fructose 1,6-bisphosphate (FBP).</text>
</comment>
<comment type="pathway">
    <text evidence="1">Polyol metabolism; glycerol degradation via glycerol kinase pathway; sn-glycerol 3-phosphate from glycerol: step 1/1.</text>
</comment>
<comment type="similarity">
    <text evidence="1">Belongs to the FGGY kinase family.</text>
</comment>